<reference key="1">
    <citation type="journal article" date="2009" name="Mol. Biol. Evol.">
        <title>Molecular evolution, functional variation, and proposed nomenclature of the gene family that includes sphingomyelinase D in sicariid spider venoms.</title>
        <authorList>
            <person name="Binford G.J."/>
            <person name="Bodner M.R."/>
            <person name="Cordes M.H."/>
            <person name="Baldwin K.L."/>
            <person name="Rynerson M.R."/>
            <person name="Burns S.N."/>
            <person name="Zobel-Thropp P.A."/>
        </authorList>
    </citation>
    <scope>NUCLEOTIDE SEQUENCE [MRNA]</scope>
    <scope>NOMENCLATURE</scope>
    <source>
        <tissue>Venom gland</tissue>
    </source>
</reference>
<evidence type="ECO:0000250" key="1">
    <source>
        <dbReference type="UniProtKB" id="A0A0D4WTV1"/>
    </source>
</evidence>
<evidence type="ECO:0000250" key="2">
    <source>
        <dbReference type="UniProtKB" id="A0A0D4WV12"/>
    </source>
</evidence>
<evidence type="ECO:0000250" key="3">
    <source>
        <dbReference type="UniProtKB" id="P0CE80"/>
    </source>
</evidence>
<evidence type="ECO:0000250" key="4">
    <source>
        <dbReference type="UniProtKB" id="Q4ZFU2"/>
    </source>
</evidence>
<evidence type="ECO:0000250" key="5">
    <source>
        <dbReference type="UniProtKB" id="Q8I914"/>
    </source>
</evidence>
<evidence type="ECO:0000303" key="6">
    <source>
    </source>
</evidence>
<evidence type="ECO:0000305" key="7"/>
<evidence type="ECO:0000305" key="8">
    <source>
    </source>
</evidence>
<organism>
    <name type="scientific">Sicarius cf. damarensis (strain GJB-2008)</name>
    <name type="common">Six-eyed sand spider</name>
    <dbReference type="NCBI Taxonomy" id="575956"/>
    <lineage>
        <taxon>Eukaryota</taxon>
        <taxon>Metazoa</taxon>
        <taxon>Ecdysozoa</taxon>
        <taxon>Arthropoda</taxon>
        <taxon>Chelicerata</taxon>
        <taxon>Arachnida</taxon>
        <taxon>Araneae</taxon>
        <taxon>Araneomorphae</taxon>
        <taxon>Haplogynae</taxon>
        <taxon>Scytodoidea</taxon>
        <taxon>Sicariidae</taxon>
        <taxon>Sicarius</taxon>
    </lineage>
</organism>
<proteinExistence type="evidence at transcript level"/>
<accession>C0JB88</accession>
<name>B2KBE_SICCD</name>
<sequence>IMGHMVNAIEQVDEFLNLGANAIEFDIDFDKDGIAQITHHGIPCDCGRKCTKKAIFTEYLDNIRQVTTPDDPELREQLVLLALDLKLQRISSAKAYRAGEDVAKKLLDHYWQRGNSRARAYILLNIPLVEDYEFIRAFKDTLKNEGYESYNDKVGINFTGNEDLDKIRDVLEILGIHKQVWQADGITSCFARGTERLKEALEKRDTPGYNYINKVYAWTLVRKSIMRRSLRLGVDGVMSNNPDRVIKVLKEKEFADKFRLATYNDNPWEKFRG</sequence>
<keyword id="KW-0204">Cytolysis</keyword>
<keyword id="KW-1061">Dermonecrotic toxin</keyword>
<keyword id="KW-1015">Disulfide bond</keyword>
<keyword id="KW-0354">Hemolysis</keyword>
<keyword id="KW-0442">Lipid degradation</keyword>
<keyword id="KW-0443">Lipid metabolism</keyword>
<keyword id="KW-0456">Lyase</keyword>
<keyword id="KW-0460">Magnesium</keyword>
<keyword id="KW-0479">Metal-binding</keyword>
<keyword id="KW-0964">Secreted</keyword>
<keyword id="KW-0800">Toxin</keyword>
<feature type="chain" id="PRO_0000392899" description="Dermonecrotic toxin SdSicTox-betaIIB1bxiv">
    <location>
        <begin position="1" status="less than"/>
        <end position="273"/>
    </location>
</feature>
<feature type="active site" evidence="5">
    <location>
        <position position="4"/>
    </location>
</feature>
<feature type="active site" description="Nucleophile" evidence="5">
    <location>
        <position position="40"/>
    </location>
</feature>
<feature type="binding site" evidence="5">
    <location>
        <position position="24"/>
    </location>
    <ligand>
        <name>Mg(2+)</name>
        <dbReference type="ChEBI" id="CHEBI:18420"/>
    </ligand>
</feature>
<feature type="binding site" evidence="5">
    <location>
        <position position="26"/>
    </location>
    <ligand>
        <name>Mg(2+)</name>
        <dbReference type="ChEBI" id="CHEBI:18420"/>
    </ligand>
</feature>
<feature type="binding site" evidence="5">
    <location>
        <position position="84"/>
    </location>
    <ligand>
        <name>Mg(2+)</name>
        <dbReference type="ChEBI" id="CHEBI:18420"/>
    </ligand>
</feature>
<feature type="disulfide bond" evidence="3">
    <location>
        <begin position="44"/>
        <end position="50"/>
    </location>
</feature>
<feature type="disulfide bond" evidence="3">
    <location>
        <begin position="46"/>
        <end position="189"/>
    </location>
</feature>
<feature type="non-terminal residue">
    <location>
        <position position="1"/>
    </location>
</feature>
<protein>
    <recommendedName>
        <fullName evidence="6">Dermonecrotic toxin SdSicTox-betaIIB1bxiv</fullName>
        <ecNumber evidence="4">4.6.1.-</ecNumber>
    </recommendedName>
    <alternativeName>
        <fullName>Phospholipase D</fullName>
        <shortName>PLD</shortName>
    </alternativeName>
    <alternativeName>
        <fullName>Sphingomyelin phosphodiesterase D</fullName>
        <shortName>SMD</shortName>
        <shortName>SMase D</shortName>
        <shortName>Sphingomyelinase D</shortName>
    </alternativeName>
</protein>
<dbReference type="EC" id="4.6.1.-" evidence="4"/>
<dbReference type="EMBL" id="FJ171523">
    <property type="protein sequence ID" value="ACN49019.1"/>
    <property type="molecule type" value="mRNA"/>
</dbReference>
<dbReference type="SMR" id="C0JB88"/>
<dbReference type="GO" id="GO:0005576">
    <property type="term" value="C:extracellular region"/>
    <property type="evidence" value="ECO:0007669"/>
    <property type="project" value="UniProtKB-SubCell"/>
</dbReference>
<dbReference type="GO" id="GO:0016829">
    <property type="term" value="F:lyase activity"/>
    <property type="evidence" value="ECO:0007669"/>
    <property type="project" value="UniProtKB-KW"/>
</dbReference>
<dbReference type="GO" id="GO:0046872">
    <property type="term" value="F:metal ion binding"/>
    <property type="evidence" value="ECO:0007669"/>
    <property type="project" value="UniProtKB-KW"/>
</dbReference>
<dbReference type="GO" id="GO:0008081">
    <property type="term" value="F:phosphoric diester hydrolase activity"/>
    <property type="evidence" value="ECO:0007669"/>
    <property type="project" value="InterPro"/>
</dbReference>
<dbReference type="GO" id="GO:0090729">
    <property type="term" value="F:toxin activity"/>
    <property type="evidence" value="ECO:0007669"/>
    <property type="project" value="UniProtKB-KW"/>
</dbReference>
<dbReference type="GO" id="GO:0031640">
    <property type="term" value="P:killing of cells of another organism"/>
    <property type="evidence" value="ECO:0007669"/>
    <property type="project" value="UniProtKB-KW"/>
</dbReference>
<dbReference type="GO" id="GO:0016042">
    <property type="term" value="P:lipid catabolic process"/>
    <property type="evidence" value="ECO:0007669"/>
    <property type="project" value="UniProtKB-KW"/>
</dbReference>
<dbReference type="CDD" id="cd08576">
    <property type="entry name" value="GDPD_like_SMaseD_PLD"/>
    <property type="match status" value="1"/>
</dbReference>
<dbReference type="Gene3D" id="3.20.20.190">
    <property type="entry name" value="Phosphatidylinositol (PI) phosphodiesterase"/>
    <property type="match status" value="1"/>
</dbReference>
<dbReference type="InterPro" id="IPR017946">
    <property type="entry name" value="PLC-like_Pdiesterase_TIM-brl"/>
</dbReference>
<dbReference type="SUPFAM" id="SSF51695">
    <property type="entry name" value="PLC-like phosphodiesterases"/>
    <property type="match status" value="1"/>
</dbReference>
<comment type="function">
    <text evidence="1 3">Dermonecrotic toxins cleave the phosphodiester linkage between the phosphate and headgroup of certain phospholipids (sphingolipid and lysolipid substrates), forming an alcohol (often choline) and a cyclic phosphate (By similarity). This toxin acts on sphingomyelin (SM) (By similarity). It may also act on ceramide phosphoethanolamine (CPE), lysophosphatidylcholine (LPC) and lysophosphatidylethanolamine (LPE), but not on lysophosphatidylserine (LPS), and lysophosphatidylglycerol (LPG) (By similarity). It acts by transphosphatidylation, releasing exclusively cyclic phosphate products as second products (By similarity). Induces dermonecrosis, hemolysis, increased vascular permeability, edema, inflammatory response, and platelet aggregation (By similarity).</text>
</comment>
<comment type="catalytic activity">
    <reaction evidence="1">
        <text>an N-(acyl)-sphingosylphosphocholine = an N-(acyl)-sphingosyl-1,3-cyclic phosphate + choline</text>
        <dbReference type="Rhea" id="RHEA:60652"/>
        <dbReference type="ChEBI" id="CHEBI:15354"/>
        <dbReference type="ChEBI" id="CHEBI:64583"/>
        <dbReference type="ChEBI" id="CHEBI:143892"/>
    </reaction>
</comment>
<comment type="catalytic activity">
    <reaction evidence="1">
        <text>an N-(acyl)-sphingosylphosphoethanolamine = an N-(acyl)-sphingosyl-1,3-cyclic phosphate + ethanolamine</text>
        <dbReference type="Rhea" id="RHEA:60648"/>
        <dbReference type="ChEBI" id="CHEBI:57603"/>
        <dbReference type="ChEBI" id="CHEBI:143891"/>
        <dbReference type="ChEBI" id="CHEBI:143892"/>
    </reaction>
</comment>
<comment type="catalytic activity">
    <reaction evidence="1">
        <text>a 1-acyl-sn-glycero-3-phosphocholine = a 1-acyl-sn-glycero-2,3-cyclic phosphate + choline</text>
        <dbReference type="Rhea" id="RHEA:60700"/>
        <dbReference type="ChEBI" id="CHEBI:15354"/>
        <dbReference type="ChEBI" id="CHEBI:58168"/>
        <dbReference type="ChEBI" id="CHEBI:143947"/>
    </reaction>
</comment>
<comment type="catalytic activity">
    <reaction evidence="1">
        <text>a 1-acyl-sn-glycero-3-phosphoethanolamine = a 1-acyl-sn-glycero-2,3-cyclic phosphate + ethanolamine</text>
        <dbReference type="Rhea" id="RHEA:60704"/>
        <dbReference type="ChEBI" id="CHEBI:57603"/>
        <dbReference type="ChEBI" id="CHEBI:64381"/>
        <dbReference type="ChEBI" id="CHEBI:143947"/>
    </reaction>
</comment>
<comment type="cofactor">
    <cofactor evidence="5">
        <name>Mg(2+)</name>
        <dbReference type="ChEBI" id="CHEBI:18420"/>
    </cofactor>
    <text evidence="5">Binds 1 Mg(2+) ion per subunit.</text>
</comment>
<comment type="subcellular location">
    <subcellularLocation>
        <location evidence="8">Secreted</location>
    </subcellularLocation>
</comment>
<comment type="tissue specificity">
    <text evidence="8">Expressed by the venom gland.</text>
</comment>
<comment type="similarity">
    <text evidence="7">Belongs to the arthropod phospholipase D family. Class II subfamily.</text>
</comment>
<comment type="caution">
    <text evidence="1 2 4">The most common activity assay for dermonecrotic toxins detects enzymatic activity by monitoring choline release from substrate. Liberation of choline from sphingomyelin (SM) or lysophosphatidylcholine (LPC) is commonly assumed to result from substrate hydrolysis, giving either ceramide-1-phosphate (C1P) or lysophosphatidic acid (LPA), respectively, as a second product. However, two studies from Lajoie and colleagues (2013 and 2015) report the observation of exclusive formation of cyclic phosphate products as second products, resulting from intramolecular transphosphatidylation. Cyclic phosphates have vastly different biological properties from their monoester counterparts, and they may be relevant to the pathology of brown spider envenomation.</text>
</comment>